<dbReference type="EMBL" id="BT030513">
    <property type="protein sequence ID" value="ABQ12953.1"/>
    <property type="molecule type" value="mRNA"/>
</dbReference>
<dbReference type="EMBL" id="BC102838">
    <property type="protein sequence ID" value="AAI02839.1"/>
    <property type="molecule type" value="mRNA"/>
</dbReference>
<dbReference type="RefSeq" id="NP_001029776.1">
    <property type="nucleotide sequence ID" value="NM_001034604.2"/>
</dbReference>
<dbReference type="SMR" id="Q3SZI6"/>
<dbReference type="FunCoup" id="Q3SZI6">
    <property type="interactions" value="3301"/>
</dbReference>
<dbReference type="STRING" id="9913.ENSBTAP00000057314"/>
<dbReference type="GlyCosmos" id="Q3SZI6">
    <property type="glycosylation" value="1 site, No reported glycans"/>
</dbReference>
<dbReference type="GlyGen" id="Q3SZI6">
    <property type="glycosylation" value="1 site"/>
</dbReference>
<dbReference type="SwissPalm" id="Q3SZI6"/>
<dbReference type="PaxDb" id="9913-ENSBTAP00000051209"/>
<dbReference type="PeptideAtlas" id="Q3SZI6"/>
<dbReference type="GeneID" id="534231"/>
<dbReference type="KEGG" id="bta:534231"/>
<dbReference type="CTD" id="6185"/>
<dbReference type="eggNOG" id="KOG2447">
    <property type="taxonomic scope" value="Eukaryota"/>
</dbReference>
<dbReference type="HOGENOM" id="CLU_017104_0_0_1"/>
<dbReference type="InParanoid" id="Q3SZI6"/>
<dbReference type="OrthoDB" id="432292at2759"/>
<dbReference type="TreeFam" id="TF106146"/>
<dbReference type="UniPathway" id="UPA00378"/>
<dbReference type="Proteomes" id="UP000009136">
    <property type="component" value="Unplaced"/>
</dbReference>
<dbReference type="GO" id="GO:0008250">
    <property type="term" value="C:oligosaccharyltransferase complex"/>
    <property type="evidence" value="ECO:0000318"/>
    <property type="project" value="GO_Central"/>
</dbReference>
<dbReference type="GO" id="GO:0006487">
    <property type="term" value="P:protein N-linked glycosylation"/>
    <property type="evidence" value="ECO:0000318"/>
    <property type="project" value="GO_Central"/>
</dbReference>
<dbReference type="InterPro" id="IPR055375">
    <property type="entry name" value="Ribophorin_II_2nd"/>
</dbReference>
<dbReference type="InterPro" id="IPR055374">
    <property type="entry name" value="Ribophorin_II_3rd"/>
</dbReference>
<dbReference type="InterPro" id="IPR056790">
    <property type="entry name" value="Ribophorin_II_C"/>
</dbReference>
<dbReference type="InterPro" id="IPR055373">
    <property type="entry name" value="Ribophorin_II_N"/>
</dbReference>
<dbReference type="InterPro" id="IPR008814">
    <property type="entry name" value="Swp1"/>
</dbReference>
<dbReference type="PANTHER" id="PTHR12640:SF0">
    <property type="entry name" value="DOLICHYL-DIPHOSPHOOLIGOSACCHARIDE--PROTEIN GLYCOSYLTRANSFERASE SUBUNIT 2"/>
    <property type="match status" value="1"/>
</dbReference>
<dbReference type="PANTHER" id="PTHR12640">
    <property type="entry name" value="RIBOPHORIN II"/>
    <property type="match status" value="1"/>
</dbReference>
<dbReference type="Pfam" id="PF05817">
    <property type="entry name" value="Ribophorin_II"/>
    <property type="match status" value="1"/>
</dbReference>
<dbReference type="Pfam" id="PF23861">
    <property type="entry name" value="Ribophorin_II_2nd"/>
    <property type="match status" value="1"/>
</dbReference>
<dbReference type="Pfam" id="PF23860">
    <property type="entry name" value="Ribophorin_II_3rd"/>
    <property type="match status" value="1"/>
</dbReference>
<dbReference type="Pfam" id="PF25147">
    <property type="entry name" value="Ribophorin_II_C"/>
    <property type="match status" value="1"/>
</dbReference>
<keyword id="KW-0256">Endoplasmic reticulum</keyword>
<keyword id="KW-0325">Glycoprotein</keyword>
<keyword id="KW-1017">Isopeptide bond</keyword>
<keyword id="KW-0472">Membrane</keyword>
<keyword id="KW-1185">Reference proteome</keyword>
<keyword id="KW-0732">Signal</keyword>
<keyword id="KW-0812">Transmembrane</keyword>
<keyword id="KW-1133">Transmembrane helix</keyword>
<keyword id="KW-0832">Ubl conjugation</keyword>
<name>RPN2_BOVIN</name>
<comment type="function">
    <text evidence="1">Subunit of the oligosaccharyl transferase (OST) complex that catalyzes the initial transfer of a defined glycan (Glc(3)Man(9)GlcNAc(2) in eukaryotes) from the lipid carrier dolichol-pyrophosphate to an asparagine residue within an Asn-X-Ser/Thr consensus motif in nascent polypeptide chains, the first step in protein N-glycosylation. N-glycosylation occurs cotranslationally and the complex associates with the Sec61 complex at the channel-forming translocon complex that mediates protein translocation across the endoplasmic reticulum (ER). All subunits are required for a maximal enzyme activity.</text>
</comment>
<comment type="pathway">
    <text evidence="2">Protein modification; protein glycosylation.</text>
</comment>
<comment type="subunit">
    <text evidence="1 2 3">Component of the oligosaccharyltransferase (OST) complex (By similarity). OST exists in two different complex forms which contain common core subunits RPN1, RPN2, OST48, OST4, DAD1 and TMEM258, either STT3A or STT3B as catalytic subunits, and form-specific accessory subunits (By similarity). STT3A complex assembly occurs through the formation of 3 subcomplexes. Subcomplex 1 contains RPN1 and TMEM258, subcomplex 2 contains the STT3A-specific subunits STT3A, DC2/OSTC, and KCP2 as well as the core subunit OST4, and subcomplex 3 contains RPN2, DAD1, and OST48. The STT3A complex can form stable complexes with the Sec61 complex or with both the Sec61 and TRAP complexes. Interacts with DDI2 (By similarity). Interacts with TMEM35A/NACHO (By similarity).</text>
</comment>
<comment type="subcellular location">
    <subcellularLocation>
        <location evidence="1">Endoplasmic reticulum</location>
    </subcellularLocation>
    <subcellularLocation>
        <location>Endoplasmic reticulum membrane</location>
        <topology evidence="5">Multi-pass membrane protein</topology>
    </subcellularLocation>
</comment>
<comment type="similarity">
    <text evidence="5">Belongs to the SWP1 family.</text>
</comment>
<feature type="signal peptide" evidence="4">
    <location>
        <begin position="1"/>
        <end position="22"/>
    </location>
</feature>
<feature type="chain" id="PRO_0000328635" description="Dolichyl-diphosphooligosaccharide--protein glycosyltransferase subunit 2">
    <location>
        <begin position="23"/>
        <end position="631"/>
    </location>
</feature>
<feature type="topological domain" description="Lumenal" evidence="4">
    <location>
        <begin position="23"/>
        <end position="540"/>
    </location>
</feature>
<feature type="transmembrane region" description="Helical" evidence="4">
    <location>
        <begin position="541"/>
        <end position="561"/>
    </location>
</feature>
<feature type="topological domain" description="Cytoplasmic" evidence="4">
    <location>
        <begin position="562"/>
        <end position="571"/>
    </location>
</feature>
<feature type="transmembrane region" description="Helical" evidence="4">
    <location>
        <begin position="572"/>
        <end position="592"/>
    </location>
</feature>
<feature type="topological domain" description="Lumenal" evidence="4">
    <location>
        <begin position="593"/>
        <end position="596"/>
    </location>
</feature>
<feature type="transmembrane region" description="Helical" evidence="4">
    <location>
        <begin position="597"/>
        <end position="617"/>
    </location>
</feature>
<feature type="topological domain" description="Cytoplasmic" evidence="4">
    <location>
        <begin position="618"/>
        <end position="631"/>
    </location>
</feature>
<feature type="glycosylation site" description="N-linked (GlcNAc...) asparagine" evidence="4">
    <location>
        <position position="106"/>
    </location>
</feature>
<feature type="cross-link" description="Glycyl lysine isopeptide (Lys-Gly) (interchain with G-Cter in ubiquitin)" evidence="2">
    <location>
        <position position="154"/>
    </location>
</feature>
<accession>Q3SZI6</accession>
<protein>
    <recommendedName>
        <fullName evidence="2">Dolichyl-diphosphooligosaccharide--protein glycosyltransferase subunit 2</fullName>
    </recommendedName>
    <alternativeName>
        <fullName>Dolichyl-diphosphooligosaccharide--protein glycosyltransferase 63 kDa subunit</fullName>
    </alternativeName>
    <alternativeName>
        <fullName>Ribophorin II</fullName>
        <shortName>RPN-II</shortName>
    </alternativeName>
    <alternativeName>
        <fullName>Ribophorin-2</fullName>
    </alternativeName>
</protein>
<proteinExistence type="evidence at transcript level"/>
<gene>
    <name evidence="2" type="primary">RPN2</name>
</gene>
<reference key="1">
    <citation type="journal article" date="2005" name="BMC Genomics">
        <title>Characterization of 954 bovine full-CDS cDNA sequences.</title>
        <authorList>
            <person name="Harhay G.P."/>
            <person name="Sonstegard T.S."/>
            <person name="Keele J.W."/>
            <person name="Heaton M.P."/>
            <person name="Clawson M.L."/>
            <person name="Snelling W.M."/>
            <person name="Wiedmann R.T."/>
            <person name="Van Tassell C.P."/>
            <person name="Smith T.P.L."/>
        </authorList>
    </citation>
    <scope>NUCLEOTIDE SEQUENCE [LARGE SCALE MRNA]</scope>
</reference>
<reference key="2">
    <citation type="submission" date="2005-08" db="EMBL/GenBank/DDBJ databases">
        <authorList>
            <consortium name="NIH - Mammalian Gene Collection (MGC) project"/>
        </authorList>
    </citation>
    <scope>NUCLEOTIDE SEQUENCE [LARGE SCALE MRNA]</scope>
    <source>
        <strain>Crossbred X Angus</strain>
        <tissue>Ileum</tissue>
    </source>
</reference>
<sequence length="631" mass="69214">MALPGSSTVFLLALTIIASTQALTPTHYLTKHDVERLKASLDRPFTSLESAFYSIVGLSSLGAQVPDVKKACTFIKSNLDPSNVDSLFYAAQSSQALSGCEISISNETKDLLLAAVSEDSSVAQIYHAVAALSGFGLPLASQEALGALTARLSKEETVLATVQALQTASYLSQQADLRSIVEEIEDLVARLDELGGVYLQFEEGLETTALFVAATYKLMDHVGTEPSIKEDQVIQLMNAIFSKKNFESLSEAFSVASAAAALSENRYHVPVVVVPEGSPSYTQEQAILRLQVTNVLSQPLTQATVKLEHAKSVASRATVLQKTSFTLIGDVFELNFMNVKFSSGYYDFSVKVEGDNRYIANTVELRVKISTEVGITNVDLSTVDKDQSIAPKTTRVTYPAKAKGTFIADSHQNFALFFQLVDVNTGAELTPHQTFVRLHNQKTGQEVVFVAEPDSKNVYKFELDTSERKLEFDSASGTYTLYLIIGDATLKNPILWNVADVVIRFPEDDVPSTVLSKNIFTPKQEIQHLFREPEKRPPTVVSNTFTALILSPLLLLFALWIRIGANVSNFTFAPSTIVFHLGHAAMLGLMYVYWTQLNMFQTLKYLAILGSVTFLAGNRMLAQQAIKRTAH</sequence>
<organism>
    <name type="scientific">Bos taurus</name>
    <name type="common">Bovine</name>
    <dbReference type="NCBI Taxonomy" id="9913"/>
    <lineage>
        <taxon>Eukaryota</taxon>
        <taxon>Metazoa</taxon>
        <taxon>Chordata</taxon>
        <taxon>Craniata</taxon>
        <taxon>Vertebrata</taxon>
        <taxon>Euteleostomi</taxon>
        <taxon>Mammalia</taxon>
        <taxon>Eutheria</taxon>
        <taxon>Laurasiatheria</taxon>
        <taxon>Artiodactyla</taxon>
        <taxon>Ruminantia</taxon>
        <taxon>Pecora</taxon>
        <taxon>Bovidae</taxon>
        <taxon>Bovinae</taxon>
        <taxon>Bos</taxon>
    </lineage>
</organism>
<evidence type="ECO:0000250" key="1">
    <source>
        <dbReference type="UniProtKB" id="F1PCT7"/>
    </source>
</evidence>
<evidence type="ECO:0000250" key="2">
    <source>
        <dbReference type="UniProtKB" id="P04844"/>
    </source>
</evidence>
<evidence type="ECO:0000250" key="3">
    <source>
        <dbReference type="UniProtKB" id="Q9DBG6"/>
    </source>
</evidence>
<evidence type="ECO:0000255" key="4"/>
<evidence type="ECO:0000305" key="5"/>